<protein>
    <recommendedName>
        <fullName>Jacalin-related lectin 10</fullName>
    </recommendedName>
</protein>
<evidence type="ECO:0000255" key="1"/>
<evidence type="ECO:0000255" key="2">
    <source>
        <dbReference type="PROSITE-ProRule" id="PRU01088"/>
    </source>
</evidence>
<evidence type="ECO:0000305" key="3"/>
<accession>Q8GWI7</accession>
<accession>Q9ZU18</accession>
<keyword id="KW-0430">Lectin</keyword>
<keyword id="KW-1185">Reference proteome</keyword>
<keyword id="KW-0677">Repeat</keyword>
<keyword id="KW-0732">Signal</keyword>
<feature type="signal peptide" evidence="1">
    <location>
        <begin position="1"/>
        <end position="23"/>
    </location>
</feature>
<feature type="chain" id="PRO_0000430377" description="Jacalin-related lectin 10">
    <location>
        <begin position="24"/>
        <end position="315"/>
    </location>
</feature>
<feature type="domain" description="Jacalin-type lectin 1" evidence="2">
    <location>
        <begin position="24"/>
        <end position="165"/>
    </location>
</feature>
<feature type="domain" description="Jacalin-type lectin 2" evidence="2">
    <location>
        <begin position="168"/>
        <end position="312"/>
    </location>
</feature>
<reference key="1">
    <citation type="journal article" date="2000" name="Nature">
        <title>Sequence and analysis of chromosome 1 of the plant Arabidopsis thaliana.</title>
        <authorList>
            <person name="Theologis A."/>
            <person name="Ecker J.R."/>
            <person name="Palm C.J."/>
            <person name="Federspiel N.A."/>
            <person name="Kaul S."/>
            <person name="White O."/>
            <person name="Alonso J."/>
            <person name="Altafi H."/>
            <person name="Araujo R."/>
            <person name="Bowman C.L."/>
            <person name="Brooks S.Y."/>
            <person name="Buehler E."/>
            <person name="Chan A."/>
            <person name="Chao Q."/>
            <person name="Chen H."/>
            <person name="Cheuk R.F."/>
            <person name="Chin C.W."/>
            <person name="Chung M.K."/>
            <person name="Conn L."/>
            <person name="Conway A.B."/>
            <person name="Conway A.R."/>
            <person name="Creasy T.H."/>
            <person name="Dewar K."/>
            <person name="Dunn P."/>
            <person name="Etgu P."/>
            <person name="Feldblyum T.V."/>
            <person name="Feng J.-D."/>
            <person name="Fong B."/>
            <person name="Fujii C.Y."/>
            <person name="Gill J.E."/>
            <person name="Goldsmith A.D."/>
            <person name="Haas B."/>
            <person name="Hansen N.F."/>
            <person name="Hughes B."/>
            <person name="Huizar L."/>
            <person name="Hunter J.L."/>
            <person name="Jenkins J."/>
            <person name="Johnson-Hopson C."/>
            <person name="Khan S."/>
            <person name="Khaykin E."/>
            <person name="Kim C.J."/>
            <person name="Koo H.L."/>
            <person name="Kremenetskaia I."/>
            <person name="Kurtz D.B."/>
            <person name="Kwan A."/>
            <person name="Lam B."/>
            <person name="Langin-Hooper S."/>
            <person name="Lee A."/>
            <person name="Lee J.M."/>
            <person name="Lenz C.A."/>
            <person name="Li J.H."/>
            <person name="Li Y.-P."/>
            <person name="Lin X."/>
            <person name="Liu S.X."/>
            <person name="Liu Z.A."/>
            <person name="Luros J.S."/>
            <person name="Maiti R."/>
            <person name="Marziali A."/>
            <person name="Militscher J."/>
            <person name="Miranda M."/>
            <person name="Nguyen M."/>
            <person name="Nierman W.C."/>
            <person name="Osborne B.I."/>
            <person name="Pai G."/>
            <person name="Peterson J."/>
            <person name="Pham P.K."/>
            <person name="Rizzo M."/>
            <person name="Rooney T."/>
            <person name="Rowley D."/>
            <person name="Sakano H."/>
            <person name="Salzberg S.L."/>
            <person name="Schwartz J.R."/>
            <person name="Shinn P."/>
            <person name="Southwick A.M."/>
            <person name="Sun H."/>
            <person name="Tallon L.J."/>
            <person name="Tambunga G."/>
            <person name="Toriumi M.J."/>
            <person name="Town C.D."/>
            <person name="Utterback T."/>
            <person name="Van Aken S."/>
            <person name="Vaysberg M."/>
            <person name="Vysotskaia V.S."/>
            <person name="Walker M."/>
            <person name="Wu D."/>
            <person name="Yu G."/>
            <person name="Fraser C.M."/>
            <person name="Venter J.C."/>
            <person name="Davis R.W."/>
        </authorList>
    </citation>
    <scope>NUCLEOTIDE SEQUENCE [LARGE SCALE GENOMIC DNA]</scope>
    <source>
        <strain>cv. Columbia</strain>
    </source>
</reference>
<reference key="2">
    <citation type="journal article" date="2017" name="Plant J.">
        <title>Araport11: a complete reannotation of the Arabidopsis thaliana reference genome.</title>
        <authorList>
            <person name="Cheng C.Y."/>
            <person name="Krishnakumar V."/>
            <person name="Chan A.P."/>
            <person name="Thibaud-Nissen F."/>
            <person name="Schobel S."/>
            <person name="Town C.D."/>
        </authorList>
    </citation>
    <scope>GENOME REANNOTATION</scope>
    <source>
        <strain>cv. Columbia</strain>
    </source>
</reference>
<reference key="3">
    <citation type="journal article" date="2002" name="Science">
        <title>Functional annotation of a full-length Arabidopsis cDNA collection.</title>
        <authorList>
            <person name="Seki M."/>
            <person name="Narusaka M."/>
            <person name="Kamiya A."/>
            <person name="Ishida J."/>
            <person name="Satou M."/>
            <person name="Sakurai T."/>
            <person name="Nakajima M."/>
            <person name="Enju A."/>
            <person name="Akiyama K."/>
            <person name="Oono Y."/>
            <person name="Muramatsu M."/>
            <person name="Hayashizaki Y."/>
            <person name="Kawai J."/>
            <person name="Carninci P."/>
            <person name="Itoh M."/>
            <person name="Ishii Y."/>
            <person name="Arakawa T."/>
            <person name="Shibata K."/>
            <person name="Shinagawa A."/>
            <person name="Shinozaki K."/>
        </authorList>
    </citation>
    <scope>NUCLEOTIDE SEQUENCE [LARGE SCALE MRNA]</scope>
    <source>
        <strain>cv. Columbia</strain>
    </source>
</reference>
<reference key="4">
    <citation type="journal article" date="2003" name="Science">
        <title>Empirical analysis of transcriptional activity in the Arabidopsis genome.</title>
        <authorList>
            <person name="Yamada K."/>
            <person name="Lim J."/>
            <person name="Dale J.M."/>
            <person name="Chen H."/>
            <person name="Shinn P."/>
            <person name="Palm C.J."/>
            <person name="Southwick A.M."/>
            <person name="Wu H.C."/>
            <person name="Kim C.J."/>
            <person name="Nguyen M."/>
            <person name="Pham P.K."/>
            <person name="Cheuk R.F."/>
            <person name="Karlin-Newmann G."/>
            <person name="Liu S.X."/>
            <person name="Lam B."/>
            <person name="Sakano H."/>
            <person name="Wu T."/>
            <person name="Yu G."/>
            <person name="Miranda M."/>
            <person name="Quach H.L."/>
            <person name="Tripp M."/>
            <person name="Chang C.H."/>
            <person name="Lee J.M."/>
            <person name="Toriumi M.J."/>
            <person name="Chan M.M."/>
            <person name="Tang C.C."/>
            <person name="Onodera C.S."/>
            <person name="Deng J.M."/>
            <person name="Akiyama K."/>
            <person name="Ansari Y."/>
            <person name="Arakawa T."/>
            <person name="Banh J."/>
            <person name="Banno F."/>
            <person name="Bowser L."/>
            <person name="Brooks S.Y."/>
            <person name="Carninci P."/>
            <person name="Chao Q."/>
            <person name="Choy N."/>
            <person name="Enju A."/>
            <person name="Goldsmith A.D."/>
            <person name="Gurjal M."/>
            <person name="Hansen N.F."/>
            <person name="Hayashizaki Y."/>
            <person name="Johnson-Hopson C."/>
            <person name="Hsuan V.W."/>
            <person name="Iida K."/>
            <person name="Karnes M."/>
            <person name="Khan S."/>
            <person name="Koesema E."/>
            <person name="Ishida J."/>
            <person name="Jiang P.X."/>
            <person name="Jones T."/>
            <person name="Kawai J."/>
            <person name="Kamiya A."/>
            <person name="Meyers C."/>
            <person name="Nakajima M."/>
            <person name="Narusaka M."/>
            <person name="Seki M."/>
            <person name="Sakurai T."/>
            <person name="Satou M."/>
            <person name="Tamse R."/>
            <person name="Vaysberg M."/>
            <person name="Wallender E.K."/>
            <person name="Wong C."/>
            <person name="Yamamura Y."/>
            <person name="Yuan S."/>
            <person name="Shinozaki K."/>
            <person name="Davis R.W."/>
            <person name="Theologis A."/>
            <person name="Ecker J.R."/>
        </authorList>
    </citation>
    <scope>NUCLEOTIDE SEQUENCE [LARGE SCALE MRNA]</scope>
    <source>
        <strain>cv. Columbia</strain>
    </source>
</reference>
<reference key="5">
    <citation type="journal article" date="2008" name="Plant Cell Physiol.">
        <title>Antagonistic jacalin-related lectins regulate the size of ER body-type beta-glucosidase complexes in Arabidopsis thaliana.</title>
        <authorList>
            <person name="Nagano A.J."/>
            <person name="Fukao Y."/>
            <person name="Fujiwara M."/>
            <person name="Nishimura M."/>
            <person name="Hara-Nishimura I."/>
        </authorList>
    </citation>
    <scope>GENE FAMILY</scope>
    <scope>NOMENCLATURE</scope>
</reference>
<dbReference type="EMBL" id="AC006216">
    <property type="protein sequence ID" value="AAD12681.1"/>
    <property type="status" value="ALT_SEQ"/>
    <property type="molecule type" value="Genomic_DNA"/>
</dbReference>
<dbReference type="EMBL" id="CP002684">
    <property type="protein sequence ID" value="AEE32752.1"/>
    <property type="molecule type" value="Genomic_DNA"/>
</dbReference>
<dbReference type="EMBL" id="BT005551">
    <property type="protein sequence ID" value="AAO63971.1"/>
    <property type="molecule type" value="mRNA"/>
</dbReference>
<dbReference type="EMBL" id="AK118817">
    <property type="protein sequence ID" value="BAC43407.1"/>
    <property type="molecule type" value="mRNA"/>
</dbReference>
<dbReference type="PIR" id="E96560">
    <property type="entry name" value="E96560"/>
</dbReference>
<dbReference type="RefSeq" id="NP_001321509.1">
    <property type="nucleotide sequence ID" value="NM_001333523.1"/>
</dbReference>
<dbReference type="RefSeq" id="NP_175619.2">
    <property type="nucleotide sequence ID" value="NM_104088.3"/>
</dbReference>
<dbReference type="SMR" id="Q8GWI7"/>
<dbReference type="BioGRID" id="26861">
    <property type="interactions" value="1"/>
</dbReference>
<dbReference type="FunCoup" id="Q8GWI7">
    <property type="interactions" value="16"/>
</dbReference>
<dbReference type="IntAct" id="Q8GWI7">
    <property type="interactions" value="1"/>
</dbReference>
<dbReference type="STRING" id="3702.Q8GWI7"/>
<dbReference type="iPTMnet" id="Q8GWI7"/>
<dbReference type="PaxDb" id="3702-AT1G52070.1"/>
<dbReference type="EnsemblPlants" id="AT1G52070.1">
    <property type="protein sequence ID" value="AT1G52070.1"/>
    <property type="gene ID" value="AT1G52070"/>
</dbReference>
<dbReference type="GeneID" id="841636"/>
<dbReference type="Gramene" id="AT1G52070.1">
    <property type="protein sequence ID" value="AT1G52070.1"/>
    <property type="gene ID" value="AT1G52070"/>
</dbReference>
<dbReference type="KEGG" id="ath:AT1G52070"/>
<dbReference type="Araport" id="AT1G52070"/>
<dbReference type="TAIR" id="AT1G52070"/>
<dbReference type="HOGENOM" id="CLU_019384_1_0_1"/>
<dbReference type="InParanoid" id="Q8GWI7"/>
<dbReference type="OMA" id="TIWSADI"/>
<dbReference type="PhylomeDB" id="Q8GWI7"/>
<dbReference type="PRO" id="PR:Q8GWI7"/>
<dbReference type="Proteomes" id="UP000006548">
    <property type="component" value="Chromosome 1"/>
</dbReference>
<dbReference type="ExpressionAtlas" id="Q8GWI7">
    <property type="expression patterns" value="baseline and differential"/>
</dbReference>
<dbReference type="GO" id="GO:0030246">
    <property type="term" value="F:carbohydrate binding"/>
    <property type="evidence" value="ECO:0007669"/>
    <property type="project" value="UniProtKB-KW"/>
</dbReference>
<dbReference type="CDD" id="cd09612">
    <property type="entry name" value="Jacalin"/>
    <property type="match status" value="2"/>
</dbReference>
<dbReference type="FunFam" id="2.100.10.30:FF:000001">
    <property type="entry name" value="Jacalin-related lectin 33"/>
    <property type="match status" value="2"/>
</dbReference>
<dbReference type="Gene3D" id="2.100.10.30">
    <property type="entry name" value="Jacalin-like lectin domain"/>
    <property type="match status" value="2"/>
</dbReference>
<dbReference type="InterPro" id="IPR001229">
    <property type="entry name" value="Jacalin-like_lectin_dom"/>
</dbReference>
<dbReference type="InterPro" id="IPR033734">
    <property type="entry name" value="Jacalin-like_lectin_dom_plant"/>
</dbReference>
<dbReference type="InterPro" id="IPR036404">
    <property type="entry name" value="Jacalin-like_lectin_dom_sf"/>
</dbReference>
<dbReference type="PANTHER" id="PTHR47293:SF52">
    <property type="entry name" value="JACALIN-RELATED LECTIN 10-RELATED"/>
    <property type="match status" value="1"/>
</dbReference>
<dbReference type="PANTHER" id="PTHR47293">
    <property type="entry name" value="JACALIN-RELATED LECTIN 3"/>
    <property type="match status" value="1"/>
</dbReference>
<dbReference type="Pfam" id="PF01419">
    <property type="entry name" value="Jacalin"/>
    <property type="match status" value="2"/>
</dbReference>
<dbReference type="SMART" id="SM00915">
    <property type="entry name" value="Jacalin"/>
    <property type="match status" value="2"/>
</dbReference>
<dbReference type="SUPFAM" id="SSF51101">
    <property type="entry name" value="Mannose-binding lectins"/>
    <property type="match status" value="2"/>
</dbReference>
<dbReference type="PROSITE" id="PS51752">
    <property type="entry name" value="JACALIN_LECTIN"/>
    <property type="match status" value="2"/>
</dbReference>
<sequence length="315" mass="34045">MVIIYIFLFLSSAIIDSTGLAKAQKLDAIGGKGGKQWDDGADHDNVAKVYIRGGLEGIQYIKFDYVKDGKTIDASIHGVSGSGFTQTFEIDYQNSEYIVSVDGYYDKSGTMQALEFKTNLKTSEVIGYPKGTTKFSLGGVNGKMVIGFHGSAGKVLNSIGAYLTTAPPTKSQLVGGLTGGEPWDDGSNYDGVKKISVTYISTLIRSINVDYEKDGQVVTRYHGMKNGDTEEFVIDYPNEYLISVEGTYNILPDDNVLVIRSLIFKTSKGRISPTYGFVSGTKFVLESQGNAIVGFYGRDGGAFDAIGVYFSPIPS</sequence>
<gene>
    <name type="primary">JAL10</name>
    <name type="ordered locus">At1g52070</name>
    <name type="ORF">F5F19.13</name>
</gene>
<comment type="similarity">
    <text evidence="2 3">Belongs to the jacalin lectin family.</text>
</comment>
<comment type="sequence caution" evidence="3">
    <conflict type="erroneous gene model prediction">
        <sequence resource="EMBL-CDS" id="AAD12681"/>
    </conflict>
</comment>
<proteinExistence type="evidence at transcript level"/>
<organism>
    <name type="scientific">Arabidopsis thaliana</name>
    <name type="common">Mouse-ear cress</name>
    <dbReference type="NCBI Taxonomy" id="3702"/>
    <lineage>
        <taxon>Eukaryota</taxon>
        <taxon>Viridiplantae</taxon>
        <taxon>Streptophyta</taxon>
        <taxon>Embryophyta</taxon>
        <taxon>Tracheophyta</taxon>
        <taxon>Spermatophyta</taxon>
        <taxon>Magnoliopsida</taxon>
        <taxon>eudicotyledons</taxon>
        <taxon>Gunneridae</taxon>
        <taxon>Pentapetalae</taxon>
        <taxon>rosids</taxon>
        <taxon>malvids</taxon>
        <taxon>Brassicales</taxon>
        <taxon>Brassicaceae</taxon>
        <taxon>Camelineae</taxon>
        <taxon>Arabidopsis</taxon>
    </lineage>
</organism>
<name>JAL10_ARATH</name>